<evidence type="ECO:0000255" key="1">
    <source>
        <dbReference type="HAMAP-Rule" id="MF_02005"/>
    </source>
</evidence>
<evidence type="ECO:0000256" key="2">
    <source>
        <dbReference type="SAM" id="MobiDB-lite"/>
    </source>
</evidence>
<organism>
    <name type="scientific">Haloarcula marismortui (strain ATCC 43049 / DSM 3752 / JCM 8966 / VKM B-1809)</name>
    <name type="common">Halobacterium marismortui</name>
    <dbReference type="NCBI Taxonomy" id="272569"/>
    <lineage>
        <taxon>Archaea</taxon>
        <taxon>Methanobacteriati</taxon>
        <taxon>Methanobacteriota</taxon>
        <taxon>Stenosarchaea group</taxon>
        <taxon>Halobacteria</taxon>
        <taxon>Halobacteriales</taxon>
        <taxon>Haloarculaceae</taxon>
        <taxon>Haloarcula</taxon>
    </lineage>
</organism>
<name>SYV_HALMA</name>
<accession>Q5V1H0</accession>
<reference key="1">
    <citation type="journal article" date="2004" name="Genome Res.">
        <title>Genome sequence of Haloarcula marismortui: a halophilic archaeon from the Dead Sea.</title>
        <authorList>
            <person name="Baliga N.S."/>
            <person name="Bonneau R."/>
            <person name="Facciotti M.T."/>
            <person name="Pan M."/>
            <person name="Glusman G."/>
            <person name="Deutsch E.W."/>
            <person name="Shannon P."/>
            <person name="Chiu Y."/>
            <person name="Weng R.S."/>
            <person name="Gan R.R."/>
            <person name="Hung P."/>
            <person name="Date S.V."/>
            <person name="Marcotte E."/>
            <person name="Hood L."/>
            <person name="Ng W.V."/>
        </authorList>
    </citation>
    <scope>NUCLEOTIDE SEQUENCE [LARGE SCALE GENOMIC DNA]</scope>
    <source>
        <strain>ATCC 43049 / DSM 3752 / JCM 8966 / VKM B-1809</strain>
    </source>
</reference>
<sequence>MLPGCYTHRLNMSDTQDPPQDESTTDESADALDGEYDPREIEPEWQDQWVADKTYAYDEDADTRFSIDTPPPTVSGNLHMGHLYQFTLQDFVARFHRMRDDTVYFPFGYDDNGIASERLTERELDIRHQDYPRREFQEKCRDVCTQFEDEFTQDVQSLAISIDWDNTYKTIAPDVQRVSQLSFLDLYEQGREYRQRAPTIWCPDCETAISQVEQEDKDKHTKFNDIAFDLVETGEGPADEDATFTISTTRPELLPACVAVFVHPDDDENQHLVGGSARVPLFEQEVPVIADERVDMETGSGIVMCCTFGDQNDIEWYQAHDLPLRLAIDESATMTDVAGEYEGMHTTEAREAIIEDLREEGSLLESRDHDHTVQVHERCEEEVEYLVTEQWYIELLDKKEEYIEAGRQMEWYPEKMATRYEHWIEGLEWDWCISRQRDSGIPIPVWYCDDCGEPVMAEREQLPVDPLSDAPPVDSCPECGHDSLTPEEDVFDTWATSSLTPLVNAGWDWDADSESFTMELPELYPFDLRPQGHDIISFWLFHTVVKCYEHTGEVPFENVMINGMVLDENREAMSKSKGNVIPPSEVLEEFPVDATRYWAAGTSIGDDFPYKEGDLEAGERLLQKLWNASRLVDQLTPAARPDEPEELAAVDEWLLAELDATVESVTAKFEDYEFSKARNELRSFFWNTFCDDYLEIAKQRLSDGEAVSTEFTLLQAHRTFLQLFAPFLPHITEELWERCYEEDSSIHTTDWPTSGGYDADLEAGETAMEVVSALRRYKTENGLPLNADLDHVEVFGHIAGFEDAVAEAMHVAQLDTYDEAPDITTEISGIDLDYSLVGPEFGSEVGAIDAAIEDGDYEIDGDTLQVAGVELDDEMFAVEESRTYSGEGEMTETESAVVVVR</sequence>
<dbReference type="EC" id="6.1.1.9" evidence="1"/>
<dbReference type="EMBL" id="AY596297">
    <property type="protein sequence ID" value="AAV46632.1"/>
    <property type="molecule type" value="Genomic_DNA"/>
</dbReference>
<dbReference type="SMR" id="Q5V1H0"/>
<dbReference type="STRING" id="272569.rrnAC1729"/>
<dbReference type="PaxDb" id="272569-rrnAC1729"/>
<dbReference type="EnsemblBacteria" id="AAV46632">
    <property type="protein sequence ID" value="AAV46632"/>
    <property type="gene ID" value="rrnAC1729"/>
</dbReference>
<dbReference type="KEGG" id="hma:rrnAC1729"/>
<dbReference type="PATRIC" id="fig|272569.17.peg.2410"/>
<dbReference type="eggNOG" id="arCOG00808">
    <property type="taxonomic scope" value="Archaea"/>
</dbReference>
<dbReference type="HOGENOM" id="CLU_001493_0_2_2"/>
<dbReference type="Proteomes" id="UP000001169">
    <property type="component" value="Chromosome I"/>
</dbReference>
<dbReference type="GO" id="GO:0005829">
    <property type="term" value="C:cytosol"/>
    <property type="evidence" value="ECO:0007669"/>
    <property type="project" value="TreeGrafter"/>
</dbReference>
<dbReference type="GO" id="GO:0002161">
    <property type="term" value="F:aminoacyl-tRNA deacylase activity"/>
    <property type="evidence" value="ECO:0007669"/>
    <property type="project" value="InterPro"/>
</dbReference>
<dbReference type="GO" id="GO:0005524">
    <property type="term" value="F:ATP binding"/>
    <property type="evidence" value="ECO:0007669"/>
    <property type="project" value="UniProtKB-UniRule"/>
</dbReference>
<dbReference type="GO" id="GO:0004832">
    <property type="term" value="F:valine-tRNA ligase activity"/>
    <property type="evidence" value="ECO:0007669"/>
    <property type="project" value="UniProtKB-UniRule"/>
</dbReference>
<dbReference type="GO" id="GO:0006438">
    <property type="term" value="P:valyl-tRNA aminoacylation"/>
    <property type="evidence" value="ECO:0007669"/>
    <property type="project" value="UniProtKB-UniRule"/>
</dbReference>
<dbReference type="CDD" id="cd07962">
    <property type="entry name" value="Anticodon_Ia_Val"/>
    <property type="match status" value="1"/>
</dbReference>
<dbReference type="FunFam" id="3.40.50.620:FF:000192">
    <property type="entry name" value="Valine--tRNA ligase"/>
    <property type="match status" value="1"/>
</dbReference>
<dbReference type="Gene3D" id="3.40.50.620">
    <property type="entry name" value="HUPs"/>
    <property type="match status" value="2"/>
</dbReference>
<dbReference type="Gene3D" id="1.10.730.10">
    <property type="entry name" value="Isoleucyl-tRNA Synthetase, Domain 1"/>
    <property type="match status" value="1"/>
</dbReference>
<dbReference type="HAMAP" id="MF_02005">
    <property type="entry name" value="Val_tRNA_synth_type2"/>
    <property type="match status" value="1"/>
</dbReference>
<dbReference type="InterPro" id="IPR001412">
    <property type="entry name" value="aa-tRNA-synth_I_CS"/>
</dbReference>
<dbReference type="InterPro" id="IPR002300">
    <property type="entry name" value="aa-tRNA-synth_Ia"/>
</dbReference>
<dbReference type="InterPro" id="IPR033705">
    <property type="entry name" value="Anticodon_Ia_Val"/>
</dbReference>
<dbReference type="InterPro" id="IPR013155">
    <property type="entry name" value="M/V/L/I-tRNA-synth_anticd-bd"/>
</dbReference>
<dbReference type="InterPro" id="IPR014729">
    <property type="entry name" value="Rossmann-like_a/b/a_fold"/>
</dbReference>
<dbReference type="InterPro" id="IPR009080">
    <property type="entry name" value="tRNAsynth_Ia_anticodon-bd"/>
</dbReference>
<dbReference type="InterPro" id="IPR009008">
    <property type="entry name" value="Val/Leu/Ile-tRNA-synth_edit"/>
</dbReference>
<dbReference type="InterPro" id="IPR022874">
    <property type="entry name" value="Valine-tRNA_ligase_type_2"/>
</dbReference>
<dbReference type="InterPro" id="IPR002303">
    <property type="entry name" value="Valyl-tRNA_ligase"/>
</dbReference>
<dbReference type="NCBIfam" id="NF009687">
    <property type="entry name" value="PRK13208.1"/>
    <property type="match status" value="1"/>
</dbReference>
<dbReference type="NCBIfam" id="TIGR00422">
    <property type="entry name" value="valS"/>
    <property type="match status" value="1"/>
</dbReference>
<dbReference type="PANTHER" id="PTHR11946:SF93">
    <property type="entry name" value="VALINE--TRNA LIGASE, CHLOROPLASTIC_MITOCHONDRIAL 2"/>
    <property type="match status" value="1"/>
</dbReference>
<dbReference type="PANTHER" id="PTHR11946">
    <property type="entry name" value="VALYL-TRNA SYNTHETASES"/>
    <property type="match status" value="1"/>
</dbReference>
<dbReference type="Pfam" id="PF08264">
    <property type="entry name" value="Anticodon_1"/>
    <property type="match status" value="1"/>
</dbReference>
<dbReference type="Pfam" id="PF00133">
    <property type="entry name" value="tRNA-synt_1"/>
    <property type="match status" value="1"/>
</dbReference>
<dbReference type="PRINTS" id="PR00986">
    <property type="entry name" value="TRNASYNTHVAL"/>
</dbReference>
<dbReference type="SUPFAM" id="SSF47323">
    <property type="entry name" value="Anticodon-binding domain of a subclass of class I aminoacyl-tRNA synthetases"/>
    <property type="match status" value="1"/>
</dbReference>
<dbReference type="SUPFAM" id="SSF52374">
    <property type="entry name" value="Nucleotidylyl transferase"/>
    <property type="match status" value="1"/>
</dbReference>
<dbReference type="SUPFAM" id="SSF50677">
    <property type="entry name" value="ValRS/IleRS/LeuRS editing domain"/>
    <property type="match status" value="1"/>
</dbReference>
<dbReference type="PROSITE" id="PS00178">
    <property type="entry name" value="AA_TRNA_LIGASE_I"/>
    <property type="match status" value="1"/>
</dbReference>
<protein>
    <recommendedName>
        <fullName evidence="1">Valine--tRNA ligase</fullName>
        <ecNumber evidence="1">6.1.1.9</ecNumber>
    </recommendedName>
    <alternativeName>
        <fullName evidence="1">Valyl-tRNA synthetase</fullName>
        <shortName evidence="1">ValRS</shortName>
    </alternativeName>
</protein>
<feature type="chain" id="PRO_0000224621" description="Valine--tRNA ligase">
    <location>
        <begin position="1"/>
        <end position="901"/>
    </location>
</feature>
<feature type="region of interest" description="Disordered" evidence="2">
    <location>
        <begin position="1"/>
        <end position="37"/>
    </location>
</feature>
<feature type="short sequence motif" description="'HIGH' region">
    <location>
        <begin position="72"/>
        <end position="82"/>
    </location>
</feature>
<feature type="short sequence motif" description="'KMSKS' region">
    <location>
        <begin position="572"/>
        <end position="576"/>
    </location>
</feature>
<feature type="compositionally biased region" description="Acidic residues" evidence="2">
    <location>
        <begin position="19"/>
        <end position="35"/>
    </location>
</feature>
<feature type="binding site" evidence="1">
    <location>
        <position position="575"/>
    </location>
    <ligand>
        <name>ATP</name>
        <dbReference type="ChEBI" id="CHEBI:30616"/>
    </ligand>
</feature>
<proteinExistence type="inferred from homology"/>
<keyword id="KW-0030">Aminoacyl-tRNA synthetase</keyword>
<keyword id="KW-0067">ATP-binding</keyword>
<keyword id="KW-0963">Cytoplasm</keyword>
<keyword id="KW-0436">Ligase</keyword>
<keyword id="KW-0547">Nucleotide-binding</keyword>
<keyword id="KW-0648">Protein biosynthesis</keyword>
<keyword id="KW-1185">Reference proteome</keyword>
<comment type="function">
    <text evidence="1">Catalyzes the attachment of valine to tRNA(Val). As ValRS can inadvertently accommodate and process structurally similar amino acids such as threonine, to avoid such errors, it has a 'posttransfer' editing activity that hydrolyzes mischarged Thr-tRNA(Val) in a tRNA-dependent manner.</text>
</comment>
<comment type="catalytic activity">
    <reaction evidence="1">
        <text>tRNA(Val) + L-valine + ATP = L-valyl-tRNA(Val) + AMP + diphosphate</text>
        <dbReference type="Rhea" id="RHEA:10704"/>
        <dbReference type="Rhea" id="RHEA-COMP:9672"/>
        <dbReference type="Rhea" id="RHEA-COMP:9708"/>
        <dbReference type="ChEBI" id="CHEBI:30616"/>
        <dbReference type="ChEBI" id="CHEBI:33019"/>
        <dbReference type="ChEBI" id="CHEBI:57762"/>
        <dbReference type="ChEBI" id="CHEBI:78442"/>
        <dbReference type="ChEBI" id="CHEBI:78537"/>
        <dbReference type="ChEBI" id="CHEBI:456215"/>
        <dbReference type="EC" id="6.1.1.9"/>
    </reaction>
</comment>
<comment type="subcellular location">
    <subcellularLocation>
        <location evidence="1">Cytoplasm</location>
    </subcellularLocation>
</comment>
<comment type="domain">
    <text evidence="1">ValRS has two distinct active sites: one for aminoacylation and one for editing. The misactivated threonine is translocated from the active site to the editing site.</text>
</comment>
<comment type="similarity">
    <text evidence="1">Belongs to the class-I aminoacyl-tRNA synthetase family. ValS type 2 subfamily.</text>
</comment>
<gene>
    <name evidence="1" type="primary">valS</name>
    <name type="ordered locus">rrnAC1729</name>
</gene>